<proteinExistence type="inferred from homology"/>
<reference key="1">
    <citation type="submission" date="2007-04" db="EMBL/GenBank/DDBJ databases">
        <title>Complete sequence of chromosome of Mycobacterium gilvum PYR-GCK.</title>
        <authorList>
            <consortium name="US DOE Joint Genome Institute"/>
            <person name="Copeland A."/>
            <person name="Lucas S."/>
            <person name="Lapidus A."/>
            <person name="Barry K."/>
            <person name="Detter J.C."/>
            <person name="Glavina del Rio T."/>
            <person name="Hammon N."/>
            <person name="Israni S."/>
            <person name="Dalin E."/>
            <person name="Tice H."/>
            <person name="Pitluck S."/>
            <person name="Chain P."/>
            <person name="Malfatti S."/>
            <person name="Shin M."/>
            <person name="Vergez L."/>
            <person name="Schmutz J."/>
            <person name="Larimer F."/>
            <person name="Land M."/>
            <person name="Hauser L."/>
            <person name="Kyrpides N."/>
            <person name="Mikhailova N."/>
            <person name="Miller C."/>
            <person name="Richardson P."/>
        </authorList>
    </citation>
    <scope>NUCLEOTIDE SEQUENCE [LARGE SCALE GENOMIC DNA]</scope>
    <source>
        <strain>PYR-GCK</strain>
    </source>
</reference>
<organism>
    <name type="scientific">Mycolicibacterium gilvum (strain PYR-GCK)</name>
    <name type="common">Mycobacterium gilvum (strain PYR-GCK)</name>
    <dbReference type="NCBI Taxonomy" id="350054"/>
    <lineage>
        <taxon>Bacteria</taxon>
        <taxon>Bacillati</taxon>
        <taxon>Actinomycetota</taxon>
        <taxon>Actinomycetes</taxon>
        <taxon>Mycobacteriales</taxon>
        <taxon>Mycobacteriaceae</taxon>
        <taxon>Mycolicibacterium</taxon>
    </lineage>
</organism>
<sequence length="54" mass="6588">MTRNEIRPIVKLRSTAGTGYTYVTRKNRRNDPDRIVLRKYDPVVRRHVDFREDR</sequence>
<comment type="similarity">
    <text evidence="1">Belongs to the bacterial ribosomal protein bL33 family.</text>
</comment>
<evidence type="ECO:0000255" key="1">
    <source>
        <dbReference type="HAMAP-Rule" id="MF_00294"/>
    </source>
</evidence>
<accession>A4T600</accession>
<name>RL331_MYCGI</name>
<keyword id="KW-0687">Ribonucleoprotein</keyword>
<keyword id="KW-0689">Ribosomal protein</keyword>
<gene>
    <name evidence="1" type="primary">rpmG1</name>
    <name type="ordered locus">Mflv_1311</name>
</gene>
<dbReference type="EMBL" id="CP000656">
    <property type="protein sequence ID" value="ABP43793.1"/>
    <property type="molecule type" value="Genomic_DNA"/>
</dbReference>
<dbReference type="SMR" id="A4T600"/>
<dbReference type="STRING" id="350054.Mflv_1311"/>
<dbReference type="KEGG" id="mgi:Mflv_1311"/>
<dbReference type="eggNOG" id="COG0267">
    <property type="taxonomic scope" value="Bacteria"/>
</dbReference>
<dbReference type="HOGENOM" id="CLU_190949_1_1_11"/>
<dbReference type="OrthoDB" id="21586at2"/>
<dbReference type="GO" id="GO:0022625">
    <property type="term" value="C:cytosolic large ribosomal subunit"/>
    <property type="evidence" value="ECO:0007669"/>
    <property type="project" value="TreeGrafter"/>
</dbReference>
<dbReference type="GO" id="GO:0003735">
    <property type="term" value="F:structural constituent of ribosome"/>
    <property type="evidence" value="ECO:0007669"/>
    <property type="project" value="InterPro"/>
</dbReference>
<dbReference type="GO" id="GO:0006412">
    <property type="term" value="P:translation"/>
    <property type="evidence" value="ECO:0007669"/>
    <property type="project" value="UniProtKB-UniRule"/>
</dbReference>
<dbReference type="FunFam" id="2.20.28.120:FF:000002">
    <property type="entry name" value="50S ribosomal protein L33"/>
    <property type="match status" value="1"/>
</dbReference>
<dbReference type="Gene3D" id="2.20.28.120">
    <property type="entry name" value="Ribosomal protein L33"/>
    <property type="match status" value="1"/>
</dbReference>
<dbReference type="HAMAP" id="MF_00294">
    <property type="entry name" value="Ribosomal_bL33"/>
    <property type="match status" value="1"/>
</dbReference>
<dbReference type="InterPro" id="IPR001705">
    <property type="entry name" value="Ribosomal_bL33"/>
</dbReference>
<dbReference type="InterPro" id="IPR018264">
    <property type="entry name" value="Ribosomal_bL33_CS"/>
</dbReference>
<dbReference type="InterPro" id="IPR038584">
    <property type="entry name" value="Ribosomal_bL33_sf"/>
</dbReference>
<dbReference type="InterPro" id="IPR011332">
    <property type="entry name" value="Ribosomal_zn-bd"/>
</dbReference>
<dbReference type="NCBIfam" id="NF001860">
    <property type="entry name" value="PRK00595.1"/>
    <property type="match status" value="1"/>
</dbReference>
<dbReference type="NCBIfam" id="TIGR01023">
    <property type="entry name" value="rpmG_bact"/>
    <property type="match status" value="1"/>
</dbReference>
<dbReference type="PANTHER" id="PTHR15238">
    <property type="entry name" value="54S RIBOSOMAL PROTEIN L39, MITOCHONDRIAL"/>
    <property type="match status" value="1"/>
</dbReference>
<dbReference type="PANTHER" id="PTHR15238:SF1">
    <property type="entry name" value="LARGE RIBOSOMAL SUBUNIT PROTEIN BL33M"/>
    <property type="match status" value="1"/>
</dbReference>
<dbReference type="Pfam" id="PF00471">
    <property type="entry name" value="Ribosomal_L33"/>
    <property type="match status" value="1"/>
</dbReference>
<dbReference type="SUPFAM" id="SSF57829">
    <property type="entry name" value="Zn-binding ribosomal proteins"/>
    <property type="match status" value="1"/>
</dbReference>
<dbReference type="PROSITE" id="PS00582">
    <property type="entry name" value="RIBOSOMAL_L33"/>
    <property type="match status" value="1"/>
</dbReference>
<protein>
    <recommendedName>
        <fullName evidence="1">Large ribosomal subunit protein bL33A</fullName>
    </recommendedName>
    <alternativeName>
        <fullName evidence="1">50S ribosomal protein L33 1</fullName>
    </alternativeName>
</protein>
<feature type="chain" id="PRO_0000356549" description="Large ribosomal subunit protein bL33A">
    <location>
        <begin position="1"/>
        <end position="54"/>
    </location>
</feature>